<comment type="function">
    <text evidence="1">Part of the ABC transporter complex PotABCD involved in spermidine/putrescine import. Responsible for energy coupling to the transport system.</text>
</comment>
<comment type="catalytic activity">
    <reaction evidence="1">
        <text>ATP + H2O + polyamine-[polyamine-binding protein]Side 1 = ADP + phosphate + polyamineSide 2 + [polyamine-binding protein]Side 1.</text>
        <dbReference type="EC" id="7.6.2.11"/>
    </reaction>
</comment>
<comment type="subunit">
    <text evidence="1">The complex is composed of two ATP-binding proteins (PotA), two transmembrane proteins (PotB and PotC) and a solute-binding protein (PotD).</text>
</comment>
<comment type="subcellular location">
    <subcellularLocation>
        <location evidence="1">Cell inner membrane</location>
        <topology evidence="1">Peripheral membrane protein</topology>
    </subcellularLocation>
</comment>
<comment type="similarity">
    <text evidence="1">Belongs to the ABC transporter superfamily. Spermidine/putrescine importer (TC 3.A.1.11.1) family.</text>
</comment>
<comment type="sequence caution" evidence="2">
    <conflict type="erroneous initiation">
        <sequence resource="EMBL-CDS" id="AAU27227"/>
    </conflict>
</comment>
<keyword id="KW-0067">ATP-binding</keyword>
<keyword id="KW-0997">Cell inner membrane</keyword>
<keyword id="KW-1003">Cell membrane</keyword>
<keyword id="KW-0472">Membrane</keyword>
<keyword id="KW-0547">Nucleotide-binding</keyword>
<keyword id="KW-1185">Reference proteome</keyword>
<keyword id="KW-1278">Translocase</keyword>
<keyword id="KW-0813">Transport</keyword>
<dbReference type="EC" id="7.6.2.11" evidence="1"/>
<dbReference type="EMBL" id="AE017354">
    <property type="protein sequence ID" value="AAU27227.1"/>
    <property type="status" value="ALT_INIT"/>
    <property type="molecule type" value="Genomic_DNA"/>
</dbReference>
<dbReference type="RefSeq" id="WP_015444607.1">
    <property type="nucleotide sequence ID" value="NC_002942.5"/>
</dbReference>
<dbReference type="RefSeq" id="YP_095174.1">
    <property type="nucleotide sequence ID" value="NC_002942.5"/>
</dbReference>
<dbReference type="SMR" id="Q5ZWE4"/>
<dbReference type="STRING" id="272624.lpg1141"/>
<dbReference type="PaxDb" id="272624-lpg1141"/>
<dbReference type="GeneID" id="57035130"/>
<dbReference type="KEGG" id="lpn:lpg1141"/>
<dbReference type="PATRIC" id="fig|272624.6.peg.1199"/>
<dbReference type="eggNOG" id="COG3842">
    <property type="taxonomic scope" value="Bacteria"/>
</dbReference>
<dbReference type="HOGENOM" id="CLU_000604_1_1_6"/>
<dbReference type="OrthoDB" id="9802264at2"/>
<dbReference type="Proteomes" id="UP000000609">
    <property type="component" value="Chromosome"/>
</dbReference>
<dbReference type="GO" id="GO:0043190">
    <property type="term" value="C:ATP-binding cassette (ABC) transporter complex"/>
    <property type="evidence" value="ECO:0007669"/>
    <property type="project" value="InterPro"/>
</dbReference>
<dbReference type="GO" id="GO:0015417">
    <property type="term" value="F:ABC-type polyamine transporter activity"/>
    <property type="evidence" value="ECO:0007669"/>
    <property type="project" value="UniProtKB-EC"/>
</dbReference>
<dbReference type="GO" id="GO:0005524">
    <property type="term" value="F:ATP binding"/>
    <property type="evidence" value="ECO:0007669"/>
    <property type="project" value="UniProtKB-KW"/>
</dbReference>
<dbReference type="GO" id="GO:0016887">
    <property type="term" value="F:ATP hydrolysis activity"/>
    <property type="evidence" value="ECO:0007669"/>
    <property type="project" value="InterPro"/>
</dbReference>
<dbReference type="FunFam" id="3.40.50.300:FF:000133">
    <property type="entry name" value="Spermidine/putrescine import ATP-binding protein PotA"/>
    <property type="match status" value="1"/>
</dbReference>
<dbReference type="Gene3D" id="2.40.50.100">
    <property type="match status" value="1"/>
</dbReference>
<dbReference type="Gene3D" id="3.40.50.300">
    <property type="entry name" value="P-loop containing nucleotide triphosphate hydrolases"/>
    <property type="match status" value="1"/>
</dbReference>
<dbReference type="InterPro" id="IPR003593">
    <property type="entry name" value="AAA+_ATPase"/>
</dbReference>
<dbReference type="InterPro" id="IPR050093">
    <property type="entry name" value="ABC_SmlMolc_Importer"/>
</dbReference>
<dbReference type="InterPro" id="IPR003439">
    <property type="entry name" value="ABC_transporter-like_ATP-bd"/>
</dbReference>
<dbReference type="InterPro" id="IPR017871">
    <property type="entry name" value="ABC_transporter-like_CS"/>
</dbReference>
<dbReference type="InterPro" id="IPR008995">
    <property type="entry name" value="Mo/tungstate-bd_C_term_dom"/>
</dbReference>
<dbReference type="InterPro" id="IPR027417">
    <property type="entry name" value="P-loop_NTPase"/>
</dbReference>
<dbReference type="InterPro" id="IPR005893">
    <property type="entry name" value="PotA-like"/>
</dbReference>
<dbReference type="InterPro" id="IPR013611">
    <property type="entry name" value="Transp-assoc_OB_typ2"/>
</dbReference>
<dbReference type="NCBIfam" id="TIGR01187">
    <property type="entry name" value="potA"/>
    <property type="match status" value="1"/>
</dbReference>
<dbReference type="NCBIfam" id="NF006987">
    <property type="entry name" value="PRK09452.1"/>
    <property type="match status" value="1"/>
</dbReference>
<dbReference type="PANTHER" id="PTHR42781">
    <property type="entry name" value="SPERMIDINE/PUTRESCINE IMPORT ATP-BINDING PROTEIN POTA"/>
    <property type="match status" value="1"/>
</dbReference>
<dbReference type="PANTHER" id="PTHR42781:SF4">
    <property type="entry name" value="SPERMIDINE_PUTRESCINE IMPORT ATP-BINDING PROTEIN POTA"/>
    <property type="match status" value="1"/>
</dbReference>
<dbReference type="Pfam" id="PF00005">
    <property type="entry name" value="ABC_tran"/>
    <property type="match status" value="1"/>
</dbReference>
<dbReference type="Pfam" id="PF08402">
    <property type="entry name" value="TOBE_2"/>
    <property type="match status" value="1"/>
</dbReference>
<dbReference type="SMART" id="SM00382">
    <property type="entry name" value="AAA"/>
    <property type="match status" value="1"/>
</dbReference>
<dbReference type="SUPFAM" id="SSF50331">
    <property type="entry name" value="MOP-like"/>
    <property type="match status" value="1"/>
</dbReference>
<dbReference type="SUPFAM" id="SSF52540">
    <property type="entry name" value="P-loop containing nucleoside triphosphate hydrolases"/>
    <property type="match status" value="1"/>
</dbReference>
<dbReference type="PROSITE" id="PS00211">
    <property type="entry name" value="ABC_TRANSPORTER_1"/>
    <property type="match status" value="1"/>
</dbReference>
<dbReference type="PROSITE" id="PS50893">
    <property type="entry name" value="ABC_TRANSPORTER_2"/>
    <property type="match status" value="1"/>
</dbReference>
<dbReference type="PROSITE" id="PS51305">
    <property type="entry name" value="POTA"/>
    <property type="match status" value="1"/>
</dbReference>
<feature type="chain" id="PRO_0000286241" description="Spermidine/putrescine import ATP-binding protein PotA">
    <location>
        <begin position="1"/>
        <end position="364"/>
    </location>
</feature>
<feature type="domain" description="ABC transporter" evidence="1">
    <location>
        <begin position="6"/>
        <end position="236"/>
    </location>
</feature>
<feature type="binding site" evidence="1">
    <location>
        <begin position="38"/>
        <end position="45"/>
    </location>
    <ligand>
        <name>ATP</name>
        <dbReference type="ChEBI" id="CHEBI:30616"/>
    </ligand>
</feature>
<accession>Q5ZWE4</accession>
<evidence type="ECO:0000255" key="1">
    <source>
        <dbReference type="HAMAP-Rule" id="MF_01726"/>
    </source>
</evidence>
<evidence type="ECO:0000305" key="2"/>
<proteinExistence type="inferred from homology"/>
<gene>
    <name evidence="1" type="primary">potA</name>
    <name type="ordered locus">lpg1141</name>
</gene>
<protein>
    <recommendedName>
        <fullName evidence="1">Spermidine/putrescine import ATP-binding protein PotA</fullName>
        <ecNumber evidence="1">7.6.2.11</ecNumber>
    </recommendedName>
</protein>
<reference key="1">
    <citation type="journal article" date="2004" name="Science">
        <title>The genomic sequence of the accidental pathogen Legionella pneumophila.</title>
        <authorList>
            <person name="Chien M."/>
            <person name="Morozova I."/>
            <person name="Shi S."/>
            <person name="Sheng H."/>
            <person name="Chen J."/>
            <person name="Gomez S.M."/>
            <person name="Asamani G."/>
            <person name="Hill K."/>
            <person name="Nuara J."/>
            <person name="Feder M."/>
            <person name="Rineer J."/>
            <person name="Greenberg J.J."/>
            <person name="Steshenko V."/>
            <person name="Park S.H."/>
            <person name="Zhao B."/>
            <person name="Teplitskaya E."/>
            <person name="Edwards J.R."/>
            <person name="Pampou S."/>
            <person name="Georghiou A."/>
            <person name="Chou I.-C."/>
            <person name="Iannuccilli W."/>
            <person name="Ulz M.E."/>
            <person name="Kim D.H."/>
            <person name="Geringer-Sameth A."/>
            <person name="Goldsberry C."/>
            <person name="Morozov P."/>
            <person name="Fischer S.G."/>
            <person name="Segal G."/>
            <person name="Qu X."/>
            <person name="Rzhetsky A."/>
            <person name="Zhang P."/>
            <person name="Cayanis E."/>
            <person name="De Jong P.J."/>
            <person name="Ju J."/>
            <person name="Kalachikov S."/>
            <person name="Shuman H.A."/>
            <person name="Russo J.J."/>
        </authorList>
    </citation>
    <scope>NUCLEOTIDE SEQUENCE [LARGE SCALE GENOMIC DNA]</scope>
    <source>
        <strain>Philadelphia 1 / ATCC 33152 / DSM 7513</strain>
    </source>
</reference>
<sequence length="364" mass="41379">MTTPLIEIRQIYKSYGNTPILNNVSLNVNHGEFLTLLGPSGCGKTTLLRLISGFEQPTQGEIFINGQCVNQLPPQKRDVHTVFQSYALFPHLSVFENVAFALRCKKTPNQEIRKRVFDALKLVQLESLAERNVKQLSGGQQQRVAIARAIINRPQVLLLDEPLSSLDYRLRKAMQSELKQLQKTLNMTFIFVTHDQEEALSMSDRIVVFNHGHIEQIGTPKAVYETPANLHVAMFIGEANIFDIQVHTVKDQDIITNIEGIQLSCKNTGNYQVNDRLHLIVRPEDIRVWSLSEVEKTEGMLPGRIVDIIYKGSTVDLKVELSSGKIINASEFFDEDDDKLEYTLHETVWVQWLPGWEVLLPYEG</sequence>
<name>POTA_LEGPH</name>
<organism>
    <name type="scientific">Legionella pneumophila subsp. pneumophila (strain Philadelphia 1 / ATCC 33152 / DSM 7513)</name>
    <dbReference type="NCBI Taxonomy" id="272624"/>
    <lineage>
        <taxon>Bacteria</taxon>
        <taxon>Pseudomonadati</taxon>
        <taxon>Pseudomonadota</taxon>
        <taxon>Gammaproteobacteria</taxon>
        <taxon>Legionellales</taxon>
        <taxon>Legionellaceae</taxon>
        <taxon>Legionella</taxon>
    </lineage>
</organism>